<dbReference type="EMBL" id="CP000113">
    <property type="protein sequence ID" value="ABF90865.1"/>
    <property type="molecule type" value="Genomic_DNA"/>
</dbReference>
<dbReference type="RefSeq" id="WP_011554628.1">
    <property type="nucleotide sequence ID" value="NC_008095.1"/>
</dbReference>
<dbReference type="SMR" id="Q1D3H2"/>
<dbReference type="STRING" id="246197.MXAN_4635"/>
<dbReference type="EnsemblBacteria" id="ABF90865">
    <property type="protein sequence ID" value="ABF90865"/>
    <property type="gene ID" value="MXAN_4635"/>
</dbReference>
<dbReference type="GeneID" id="41361935"/>
<dbReference type="KEGG" id="mxa:MXAN_4635"/>
<dbReference type="eggNOG" id="COG1664">
    <property type="taxonomic scope" value="Bacteria"/>
</dbReference>
<dbReference type="HOGENOM" id="CLU_1293674_0_0_7"/>
<dbReference type="OrthoDB" id="119922at2"/>
<dbReference type="Proteomes" id="UP000002402">
    <property type="component" value="Chromosome"/>
</dbReference>
<dbReference type="GO" id="GO:0005737">
    <property type="term" value="C:cytoplasm"/>
    <property type="evidence" value="ECO:0007669"/>
    <property type="project" value="UniProtKB-KW"/>
</dbReference>
<dbReference type="GO" id="GO:0005856">
    <property type="term" value="C:cytoskeleton"/>
    <property type="evidence" value="ECO:0007669"/>
    <property type="project" value="UniProtKB-SubCell"/>
</dbReference>
<dbReference type="GO" id="GO:0007059">
    <property type="term" value="P:chromosome segregation"/>
    <property type="evidence" value="ECO:0007669"/>
    <property type="project" value="UniProtKB-KW"/>
</dbReference>
<dbReference type="InterPro" id="IPR007607">
    <property type="entry name" value="BacA/B"/>
</dbReference>
<dbReference type="PANTHER" id="PTHR35024">
    <property type="entry name" value="HYPOTHETICAL CYTOSOLIC PROTEIN"/>
    <property type="match status" value="1"/>
</dbReference>
<dbReference type="PANTHER" id="PTHR35024:SF4">
    <property type="entry name" value="POLYMER-FORMING CYTOSKELETAL PROTEIN"/>
    <property type="match status" value="1"/>
</dbReference>
<dbReference type="Pfam" id="PF04519">
    <property type="entry name" value="Bactofilin"/>
    <property type="match status" value="1"/>
</dbReference>
<gene>
    <name evidence="4" type="primary">bacP</name>
    <name evidence="6" type="ordered locus">MXAN_4635</name>
</gene>
<organism>
    <name type="scientific">Myxococcus xanthus (strain DK1622)</name>
    <dbReference type="NCBI Taxonomy" id="246197"/>
    <lineage>
        <taxon>Bacteria</taxon>
        <taxon>Pseudomonadati</taxon>
        <taxon>Myxococcota</taxon>
        <taxon>Myxococcia</taxon>
        <taxon>Myxococcales</taxon>
        <taxon>Cystobacterineae</taxon>
        <taxon>Myxococcaceae</taxon>
        <taxon>Myxococcus</taxon>
    </lineage>
</organism>
<evidence type="ECO:0000256" key="1">
    <source>
        <dbReference type="SAM" id="MobiDB-lite"/>
    </source>
</evidence>
<evidence type="ECO:0000269" key="2">
    <source>
    </source>
</evidence>
<evidence type="ECO:0000269" key="3">
    <source>
    </source>
</evidence>
<evidence type="ECO:0000303" key="4">
    <source>
    </source>
</evidence>
<evidence type="ECO:0000305" key="5">
    <source>
    </source>
</evidence>
<evidence type="ECO:0000312" key="6">
    <source>
        <dbReference type="EMBL" id="ABF90865.1"/>
    </source>
</evidence>
<reference evidence="6" key="1">
    <citation type="journal article" date="2006" name="Proc. Natl. Acad. Sci. U.S.A.">
        <title>Evolution of sensory complexity recorded in a myxobacterial genome.</title>
        <authorList>
            <person name="Goldman B.S."/>
            <person name="Nierman W.C."/>
            <person name="Kaiser D."/>
            <person name="Slater S.C."/>
            <person name="Durkin A.S."/>
            <person name="Eisen J.A."/>
            <person name="Ronning C.M."/>
            <person name="Barbazuk W.B."/>
            <person name="Blanchard M."/>
            <person name="Field C."/>
            <person name="Halling C."/>
            <person name="Hinkle G."/>
            <person name="Iartchuk O."/>
            <person name="Kim H.S."/>
            <person name="Mackenzie C."/>
            <person name="Madupu R."/>
            <person name="Miller N."/>
            <person name="Shvartsbeyn A."/>
            <person name="Sullivan S.A."/>
            <person name="Vaudin M."/>
            <person name="Wiegand R."/>
            <person name="Kaplan H.B."/>
        </authorList>
    </citation>
    <scope>NUCLEOTIDE SEQUENCE [LARGE SCALE GENOMIC DNA]</scope>
    <source>
        <strain>DK1622</strain>
    </source>
</reference>
<reference key="2">
    <citation type="journal article" date="2017" name="Nat. Commun.">
        <title>Bactofilin-mediated organization of the ParABS chromosome segregation system in Myxococcus xanthus.</title>
        <authorList>
            <person name="Lin L."/>
            <person name="Osorio Valeriano M."/>
            <person name="Harms A."/>
            <person name="Soegaard-Andersen L."/>
            <person name="Thanbichler M."/>
        </authorList>
    </citation>
    <scope>FUNCTION</scope>
    <scope>SUBUNIT</scope>
    <scope>SUBCELLULAR LOCATION</scope>
    <scope>DOMAIN</scope>
    <scope>DISRUPTION PHENOTYPE</scope>
    <scope>MUTAGENESIS OF ARG-240</scope>
    <source>
        <strain>DK1622</strain>
    </source>
</reference>
<reference key="3">
    <citation type="journal article" date="2020" name="Mol. Microbiol.">
        <title>SMC and the bactofilin/PadC scaffold have distinct yet redundant functions in chromosome segregation and organization in Myxococcus xanthus.</title>
        <authorList>
            <person name="Anand D."/>
            <person name="Schumacher D."/>
            <person name="Soegaard-Andersen L."/>
        </authorList>
    </citation>
    <scope>FUNCTION</scope>
    <scope>SUBCELLULAR LOCATION</scope>
    <scope>DISRUPTION PHENOTYPE</scope>
    <source>
        <strain>DK1622</strain>
    </source>
</reference>
<keyword id="KW-0159">Chromosome partition</keyword>
<keyword id="KW-0963">Cytoplasm</keyword>
<keyword id="KW-0206">Cytoskeleton</keyword>
<keyword id="KW-1185">Reference proteome</keyword>
<sequence>MATAKELSASSNVDNTVVGPSILISGRLTGDEDLTVRGRVEGELTLSRTLIVEPSGVVKANVAVKNAIVSGVVVGNINATESVELTREGRMVGDIRAPRVIIVDGASFRGRVDMGDVEPGRLPAERPAVVRPTAVTRPTATPARPTIPAARPMPPPPPSRPTPPPPPARPSAPPAVTRPSAPITRPGLGGLGSKPLPPPPPTRVERAEPQAGQAGSAEPPTPVLVGAGAKKKVVVKKKTR</sequence>
<accession>Q1D3H2</accession>
<proteinExistence type="evidence at protein level"/>
<name>BACP_MYXXD</name>
<feature type="chain" id="PRO_0000460329" description="Bactofilin BacP">
    <location>
        <begin position="1"/>
        <end position="240"/>
    </location>
</feature>
<feature type="region of interest" description="Interacts with PadC" evidence="2">
    <location>
        <begin position="116"/>
        <end position="240"/>
    </location>
</feature>
<feature type="region of interest" description="Disordered" evidence="1">
    <location>
        <begin position="117"/>
        <end position="240"/>
    </location>
</feature>
<feature type="compositionally biased region" description="Low complexity" evidence="1">
    <location>
        <begin position="126"/>
        <end position="150"/>
    </location>
</feature>
<feature type="compositionally biased region" description="Pro residues" evidence="1">
    <location>
        <begin position="151"/>
        <end position="173"/>
    </location>
</feature>
<feature type="compositionally biased region" description="Basic residues" evidence="1">
    <location>
        <begin position="229"/>
        <end position="240"/>
    </location>
</feature>
<feature type="mutagenesis site" description="Forms extended unipolar patches, impaired growth, severe chromosome segregation defects, ParA (mis)localizes with this mutant." evidence="2">
    <original>R</original>
    <variation>RYPYDVPDYA</variation>
    <location>
        <position position="240"/>
    </location>
</feature>
<protein>
    <recommendedName>
        <fullName evidence="4">Bactofilin BacP</fullName>
    </recommendedName>
</protein>
<comment type="function">
    <text evidence="2">A non-essential component of the chromosome segregation machinery (PubMed:29180656). Positions the ParA-ParB-parS chromosome segregation machinery within the cell; BacP seems to be the most important bactofilin in this process (PubMed:29180656). Forms a heteropolymeric, subpolar scaffold in the cell; BacP probably forms the core, BacO contributes to position and integrity while BacN does not seem to contribute to assembly (PubMed:29180656).</text>
</comment>
<comment type="subunit">
    <text evidence="2">Interacts with BacN and probably also BacO, the 3 proteins colocalize as an extended structure (PubMed:29180656). Interacts with PadC (PubMed:29180656).</text>
</comment>
<comment type="subcellular location">
    <subcellularLocation>
        <location evidence="2 3">Cytoplasm</location>
        <location evidence="2 3">Cytoskeleton</location>
    </subcellularLocation>
    <text evidence="2 3">Forms subpolar patches 1-2 um in length (PubMed:29180656, PubMed:32738827). In new cells there is 1 mature patch and one nascent patch. As cells elongate the nascent patch grows and a new one assembles at midcell, which splits upon division (PubMed:29180656). The patches colocalize with ParB (PubMed:29180656).</text>
</comment>
<comment type="disruption phenotype">
    <text evidence="2 3">BacO forms single filaments from one pole, mislocalization of ParA and of ParB-parS complexes, nucleoids are more compact (PubMed:29180656). PadC is found throughout the cell (PubMed:29180656). In a triple bacN-bacO-bacP deletion ParA, ParB-parS and PadC are also mislocalized, nucleoids are more compact, DNA origin regions are mislocalized, DNA content increases (PubMed:29180656, PubMed:32738827). The triple bacNOP deletion is synthetically lethal with smc or double scpAB deletions (PubMed:32738827).</text>
</comment>
<comment type="similarity">
    <text evidence="5">Belongs to the bactofilin family.</text>
</comment>